<dbReference type="EMBL" id="AP006716">
    <property type="protein sequence ID" value="BAE04372.1"/>
    <property type="molecule type" value="Genomic_DNA"/>
</dbReference>
<dbReference type="RefSeq" id="WP_011275368.1">
    <property type="nucleotide sequence ID" value="NC_007168.1"/>
</dbReference>
<dbReference type="SMR" id="Q4L7K3"/>
<dbReference type="KEGG" id="sha:SH1063"/>
<dbReference type="eggNOG" id="COG4129">
    <property type="taxonomic scope" value="Bacteria"/>
</dbReference>
<dbReference type="HOGENOM" id="CLU_067028_0_0_9"/>
<dbReference type="OrthoDB" id="2690036at2"/>
<dbReference type="Proteomes" id="UP000000543">
    <property type="component" value="Chromosome"/>
</dbReference>
<dbReference type="GO" id="GO:0005886">
    <property type="term" value="C:plasma membrane"/>
    <property type="evidence" value="ECO:0007669"/>
    <property type="project" value="UniProtKB-SubCell"/>
</dbReference>
<dbReference type="InterPro" id="IPR010343">
    <property type="entry name" value="ArAE_1"/>
</dbReference>
<dbReference type="PANTHER" id="PTHR30509:SF9">
    <property type="entry name" value="MULTIDRUG RESISTANCE PROTEIN MDTO"/>
    <property type="match status" value="1"/>
</dbReference>
<dbReference type="PANTHER" id="PTHR30509">
    <property type="entry name" value="P-HYDROXYBENZOIC ACID EFFLUX PUMP SUBUNIT-RELATED"/>
    <property type="match status" value="1"/>
</dbReference>
<dbReference type="Pfam" id="PF06081">
    <property type="entry name" value="ArAE_1"/>
    <property type="match status" value="1"/>
</dbReference>
<accession>Q4L7K3</accession>
<gene>
    <name type="ordered locus">SH1063</name>
</gene>
<sequence length="329" mass="37545">MDKWYKKIIGARTIKTGLATFLTSLFCLMLDLTPIFAILTAIVTIEPTAKASLKKGYRRLPATVIGALFAVLFTFIFGDPSALTYTFSALFTILVCTKLNLQVGTTVAVLTSVAMIPGIHDAYLFNFFSRLLTALIGLVTAGLVNFIVLPPKYYQQIEDNLTQSEYKMYELFSSRCNELLLGKFDSDHSNDLLNKLMGVINKTETLTGYQKDELRYHKNKEDEWKRLKNISNRSYIDRLLATHLSNIIYLPKHIHLVFTPEEKIAIIKISNSVNNIIKSNHFEPHRSSASTLKSSVKRLEEFDQNQIKSHVIYEILLIYKLLDSRYNDK</sequence>
<keyword id="KW-1003">Cell membrane</keyword>
<keyword id="KW-0472">Membrane</keyword>
<keyword id="KW-0812">Transmembrane</keyword>
<keyword id="KW-1133">Transmembrane helix</keyword>
<evidence type="ECO:0000255" key="1"/>
<evidence type="ECO:0000305" key="2"/>
<reference key="1">
    <citation type="journal article" date="2005" name="J. Bacteriol.">
        <title>Whole-genome sequencing of Staphylococcus haemolyticus uncovers the extreme plasticity of its genome and the evolution of human-colonizing staphylococcal species.</title>
        <authorList>
            <person name="Takeuchi F."/>
            <person name="Watanabe S."/>
            <person name="Baba T."/>
            <person name="Yuzawa H."/>
            <person name="Ito T."/>
            <person name="Morimoto Y."/>
            <person name="Kuroda M."/>
            <person name="Cui L."/>
            <person name="Takahashi M."/>
            <person name="Ankai A."/>
            <person name="Baba S."/>
            <person name="Fukui S."/>
            <person name="Lee J.C."/>
            <person name="Hiramatsu K."/>
        </authorList>
    </citation>
    <scope>NUCLEOTIDE SEQUENCE [LARGE SCALE GENOMIC DNA]</scope>
    <source>
        <strain>JCSC1435</strain>
    </source>
</reference>
<proteinExistence type="inferred from homology"/>
<name>Y1063_STAHJ</name>
<comment type="subcellular location">
    <subcellularLocation>
        <location evidence="2">Cell membrane</location>
        <topology evidence="2">Multi-pass membrane protein</topology>
    </subcellularLocation>
</comment>
<comment type="similarity">
    <text evidence="2">Belongs to the UPF0421 family.</text>
</comment>
<organism>
    <name type="scientific">Staphylococcus haemolyticus (strain JCSC1435)</name>
    <dbReference type="NCBI Taxonomy" id="279808"/>
    <lineage>
        <taxon>Bacteria</taxon>
        <taxon>Bacillati</taxon>
        <taxon>Bacillota</taxon>
        <taxon>Bacilli</taxon>
        <taxon>Bacillales</taxon>
        <taxon>Staphylococcaceae</taxon>
        <taxon>Staphylococcus</taxon>
    </lineage>
</organism>
<feature type="chain" id="PRO_0000283025" description="UPF0421 protein SH1063">
    <location>
        <begin position="1"/>
        <end position="329"/>
    </location>
</feature>
<feature type="transmembrane region" description="Helical" evidence="1">
    <location>
        <begin position="25"/>
        <end position="45"/>
    </location>
</feature>
<feature type="transmembrane region" description="Helical" evidence="1">
    <location>
        <begin position="60"/>
        <end position="80"/>
    </location>
</feature>
<feature type="transmembrane region" description="Helical" evidence="1">
    <location>
        <begin position="87"/>
        <end position="107"/>
    </location>
</feature>
<feature type="transmembrane region" description="Helical" evidence="1">
    <location>
        <begin position="108"/>
        <end position="128"/>
    </location>
</feature>
<feature type="transmembrane region" description="Helical" evidence="1">
    <location>
        <begin position="131"/>
        <end position="151"/>
    </location>
</feature>
<protein>
    <recommendedName>
        <fullName>UPF0421 protein SH1063</fullName>
    </recommendedName>
</protein>